<organism>
    <name type="scientific">Escherichia coli O17:K52:H18 (strain UMN026 / ExPEC)</name>
    <dbReference type="NCBI Taxonomy" id="585056"/>
    <lineage>
        <taxon>Bacteria</taxon>
        <taxon>Pseudomonadati</taxon>
        <taxon>Pseudomonadota</taxon>
        <taxon>Gammaproteobacteria</taxon>
        <taxon>Enterobacterales</taxon>
        <taxon>Enterobacteriaceae</taxon>
        <taxon>Escherichia</taxon>
    </lineage>
</organism>
<evidence type="ECO:0000255" key="1">
    <source>
        <dbReference type="HAMAP-Rule" id="MF_00368"/>
    </source>
</evidence>
<evidence type="ECO:0000305" key="2"/>
<feature type="chain" id="PRO_1000121434" description="Large ribosomal subunit protein bL12">
    <location>
        <begin position="1"/>
        <end position="121"/>
    </location>
</feature>
<sequence>MSITKDQIIEAVAAMSVMDVVELISAMEEKFGVSAAAAVAVAAGPVEAAEEKTEFDVILKAAGANKVAVIKAVRGATGLGLKEAKDLVESAPAALKEGVSKDDAEALKKALEEAGAEVEVK</sequence>
<proteinExistence type="inferred from homology"/>
<gene>
    <name evidence="1" type="primary">rplL</name>
    <name type="ordered locus">ECUMN_4508</name>
</gene>
<accession>B7NFS6</accession>
<name>RL7_ECOLU</name>
<keyword id="KW-0687">Ribonucleoprotein</keyword>
<keyword id="KW-0689">Ribosomal protein</keyword>
<dbReference type="EMBL" id="CU928163">
    <property type="protein sequence ID" value="CAR15633.1"/>
    <property type="molecule type" value="Genomic_DNA"/>
</dbReference>
<dbReference type="RefSeq" id="WP_000028878.1">
    <property type="nucleotide sequence ID" value="NC_011751.1"/>
</dbReference>
<dbReference type="RefSeq" id="YP_002415123.1">
    <property type="nucleotide sequence ID" value="NC_011751.1"/>
</dbReference>
<dbReference type="SMR" id="B7NFS6"/>
<dbReference type="STRING" id="585056.ECUMN_4508"/>
<dbReference type="GeneID" id="86944525"/>
<dbReference type="KEGG" id="eum:ECUMN_4508"/>
<dbReference type="PATRIC" id="fig|585056.7.peg.4679"/>
<dbReference type="HOGENOM" id="CLU_086499_3_2_6"/>
<dbReference type="Proteomes" id="UP000007097">
    <property type="component" value="Chromosome"/>
</dbReference>
<dbReference type="GO" id="GO:0022625">
    <property type="term" value="C:cytosolic large ribosomal subunit"/>
    <property type="evidence" value="ECO:0007669"/>
    <property type="project" value="TreeGrafter"/>
</dbReference>
<dbReference type="GO" id="GO:0003729">
    <property type="term" value="F:mRNA binding"/>
    <property type="evidence" value="ECO:0007669"/>
    <property type="project" value="TreeGrafter"/>
</dbReference>
<dbReference type="GO" id="GO:0003735">
    <property type="term" value="F:structural constituent of ribosome"/>
    <property type="evidence" value="ECO:0007669"/>
    <property type="project" value="InterPro"/>
</dbReference>
<dbReference type="GO" id="GO:0006412">
    <property type="term" value="P:translation"/>
    <property type="evidence" value="ECO:0007669"/>
    <property type="project" value="UniProtKB-UniRule"/>
</dbReference>
<dbReference type="CDD" id="cd00387">
    <property type="entry name" value="Ribosomal_L7_L12"/>
    <property type="match status" value="1"/>
</dbReference>
<dbReference type="FunFam" id="1.20.5.710:FF:000001">
    <property type="entry name" value="50S ribosomal protein L7/L12"/>
    <property type="match status" value="1"/>
</dbReference>
<dbReference type="FunFam" id="3.30.1390.10:FF:000001">
    <property type="entry name" value="50S ribosomal protein L7/L12"/>
    <property type="match status" value="1"/>
</dbReference>
<dbReference type="Gene3D" id="3.30.1390.10">
    <property type="match status" value="1"/>
</dbReference>
<dbReference type="Gene3D" id="1.20.5.710">
    <property type="entry name" value="Single helix bin"/>
    <property type="match status" value="1"/>
</dbReference>
<dbReference type="HAMAP" id="MF_00368">
    <property type="entry name" value="Ribosomal_bL12"/>
    <property type="match status" value="1"/>
</dbReference>
<dbReference type="InterPro" id="IPR000206">
    <property type="entry name" value="Ribosomal_bL12"/>
</dbReference>
<dbReference type="InterPro" id="IPR013823">
    <property type="entry name" value="Ribosomal_bL12_C"/>
</dbReference>
<dbReference type="InterPro" id="IPR014719">
    <property type="entry name" value="Ribosomal_bL12_C/ClpS-like"/>
</dbReference>
<dbReference type="InterPro" id="IPR008932">
    <property type="entry name" value="Ribosomal_bL12_oligo"/>
</dbReference>
<dbReference type="InterPro" id="IPR036235">
    <property type="entry name" value="Ribosomal_bL12_oligo_N_sf"/>
</dbReference>
<dbReference type="NCBIfam" id="TIGR00855">
    <property type="entry name" value="L12"/>
    <property type="match status" value="1"/>
</dbReference>
<dbReference type="PANTHER" id="PTHR45987">
    <property type="entry name" value="39S RIBOSOMAL PROTEIN L12"/>
    <property type="match status" value="1"/>
</dbReference>
<dbReference type="PANTHER" id="PTHR45987:SF4">
    <property type="entry name" value="LARGE RIBOSOMAL SUBUNIT PROTEIN BL12M"/>
    <property type="match status" value="1"/>
</dbReference>
<dbReference type="Pfam" id="PF00542">
    <property type="entry name" value="Ribosomal_L12"/>
    <property type="match status" value="1"/>
</dbReference>
<dbReference type="Pfam" id="PF16320">
    <property type="entry name" value="Ribosomal_L12_N"/>
    <property type="match status" value="1"/>
</dbReference>
<dbReference type="SUPFAM" id="SSF54736">
    <property type="entry name" value="ClpS-like"/>
    <property type="match status" value="1"/>
</dbReference>
<dbReference type="SUPFAM" id="SSF48300">
    <property type="entry name" value="Ribosomal protein L7/12, oligomerisation (N-terminal) domain"/>
    <property type="match status" value="1"/>
</dbReference>
<protein>
    <recommendedName>
        <fullName evidence="1">Large ribosomal subunit protein bL12</fullName>
    </recommendedName>
    <alternativeName>
        <fullName evidence="2">50S ribosomal protein L7/L12</fullName>
    </alternativeName>
</protein>
<comment type="function">
    <text evidence="1">Forms part of the ribosomal stalk which helps the ribosome interact with GTP-bound translation factors. Is thus essential for accurate translation.</text>
</comment>
<comment type="subunit">
    <text evidence="1">Homodimer. Part of the ribosomal stalk of the 50S ribosomal subunit. Forms a multimeric L10(L12)X complex, where L10 forms an elongated spine to which 2 to 4 L12 dimers bind in a sequential fashion. Binds GTP-bound translation factors.</text>
</comment>
<comment type="similarity">
    <text evidence="1">Belongs to the bacterial ribosomal protein bL12 family.</text>
</comment>
<reference key="1">
    <citation type="journal article" date="2009" name="PLoS Genet.">
        <title>Organised genome dynamics in the Escherichia coli species results in highly diverse adaptive paths.</title>
        <authorList>
            <person name="Touchon M."/>
            <person name="Hoede C."/>
            <person name="Tenaillon O."/>
            <person name="Barbe V."/>
            <person name="Baeriswyl S."/>
            <person name="Bidet P."/>
            <person name="Bingen E."/>
            <person name="Bonacorsi S."/>
            <person name="Bouchier C."/>
            <person name="Bouvet O."/>
            <person name="Calteau A."/>
            <person name="Chiapello H."/>
            <person name="Clermont O."/>
            <person name="Cruveiller S."/>
            <person name="Danchin A."/>
            <person name="Diard M."/>
            <person name="Dossat C."/>
            <person name="Karoui M.E."/>
            <person name="Frapy E."/>
            <person name="Garry L."/>
            <person name="Ghigo J.M."/>
            <person name="Gilles A.M."/>
            <person name="Johnson J."/>
            <person name="Le Bouguenec C."/>
            <person name="Lescat M."/>
            <person name="Mangenot S."/>
            <person name="Martinez-Jehanne V."/>
            <person name="Matic I."/>
            <person name="Nassif X."/>
            <person name="Oztas S."/>
            <person name="Petit M.A."/>
            <person name="Pichon C."/>
            <person name="Rouy Z."/>
            <person name="Ruf C.S."/>
            <person name="Schneider D."/>
            <person name="Tourret J."/>
            <person name="Vacherie B."/>
            <person name="Vallenet D."/>
            <person name="Medigue C."/>
            <person name="Rocha E.P.C."/>
            <person name="Denamur E."/>
        </authorList>
    </citation>
    <scope>NUCLEOTIDE SEQUENCE [LARGE SCALE GENOMIC DNA]</scope>
    <source>
        <strain>UMN026 / ExPEC</strain>
    </source>
</reference>